<accession>Q0T6V3</accession>
<dbReference type="EC" id="3.5.2.9" evidence="1"/>
<dbReference type="EMBL" id="CP000266">
    <property type="protein sequence ID" value="ABF02873.1"/>
    <property type="molecule type" value="Genomic_DNA"/>
</dbReference>
<dbReference type="RefSeq" id="WP_000687151.1">
    <property type="nucleotide sequence ID" value="NC_008258.1"/>
</dbReference>
<dbReference type="SMR" id="Q0T6V3"/>
<dbReference type="KEGG" id="sfv:SFV_0622"/>
<dbReference type="HOGENOM" id="CLU_069535_0_0_6"/>
<dbReference type="Proteomes" id="UP000000659">
    <property type="component" value="Chromosome"/>
</dbReference>
<dbReference type="GO" id="GO:0017168">
    <property type="term" value="F:5-oxoprolinase (ATP-hydrolyzing) activity"/>
    <property type="evidence" value="ECO:0007669"/>
    <property type="project" value="UniProtKB-UniRule"/>
</dbReference>
<dbReference type="GO" id="GO:0005524">
    <property type="term" value="F:ATP binding"/>
    <property type="evidence" value="ECO:0007669"/>
    <property type="project" value="UniProtKB-UniRule"/>
</dbReference>
<dbReference type="GO" id="GO:0005975">
    <property type="term" value="P:carbohydrate metabolic process"/>
    <property type="evidence" value="ECO:0007669"/>
    <property type="project" value="InterPro"/>
</dbReference>
<dbReference type="CDD" id="cd10800">
    <property type="entry name" value="LamB_YcsF_YbgL_like"/>
    <property type="match status" value="1"/>
</dbReference>
<dbReference type="Gene3D" id="3.20.20.370">
    <property type="entry name" value="Glycoside hydrolase/deacetylase"/>
    <property type="match status" value="1"/>
</dbReference>
<dbReference type="HAMAP" id="MF_00691">
    <property type="entry name" value="PxpA"/>
    <property type="match status" value="1"/>
</dbReference>
<dbReference type="InterPro" id="IPR011330">
    <property type="entry name" value="Glyco_hydro/deAcase_b/a-brl"/>
</dbReference>
<dbReference type="InterPro" id="IPR005501">
    <property type="entry name" value="LamB/YcsF/PxpA-like"/>
</dbReference>
<dbReference type="NCBIfam" id="NF003812">
    <property type="entry name" value="PRK05406.1-1"/>
    <property type="match status" value="1"/>
</dbReference>
<dbReference type="NCBIfam" id="NF003814">
    <property type="entry name" value="PRK05406.1-3"/>
    <property type="match status" value="1"/>
</dbReference>
<dbReference type="NCBIfam" id="NF003815">
    <property type="entry name" value="PRK05406.1-4"/>
    <property type="match status" value="1"/>
</dbReference>
<dbReference type="NCBIfam" id="NF003816">
    <property type="entry name" value="PRK05406.1-5"/>
    <property type="match status" value="1"/>
</dbReference>
<dbReference type="PANTHER" id="PTHR30292:SF0">
    <property type="entry name" value="5-OXOPROLINASE SUBUNIT A"/>
    <property type="match status" value="1"/>
</dbReference>
<dbReference type="PANTHER" id="PTHR30292">
    <property type="entry name" value="UNCHARACTERIZED PROTEIN YBGL-RELATED"/>
    <property type="match status" value="1"/>
</dbReference>
<dbReference type="Pfam" id="PF03746">
    <property type="entry name" value="LamB_YcsF"/>
    <property type="match status" value="1"/>
</dbReference>
<dbReference type="SUPFAM" id="SSF88713">
    <property type="entry name" value="Glycoside hydrolase/deacetylase"/>
    <property type="match status" value="1"/>
</dbReference>
<gene>
    <name evidence="1" type="primary">pxpA</name>
    <name type="ordered locus">SFV_0622</name>
</gene>
<sequence length="244" mass="25855">MKIDLNADLGEGCASDAELLTLVSSANIACGFHAGDAQTMQACVREEIKNGVAIGAHPSFPDRENFGRSAMQLPPETVYAQTLYQIGALATIARAQGGVMRHVKPHGMLYNQAAKEAQLADAIARAVYACDPALVLVGLAGSELIRAGKQYGLTTREEVFADRGYQADGSLVPRSQPGALIENEEQALAQTLEMVQHGRVKSITGEWATVAAQTVCLHGDGEHALAFARRLRATFAKKGIVVAA</sequence>
<reference key="1">
    <citation type="journal article" date="2006" name="BMC Genomics">
        <title>Complete genome sequence of Shigella flexneri 5b and comparison with Shigella flexneri 2a.</title>
        <authorList>
            <person name="Nie H."/>
            <person name="Yang F."/>
            <person name="Zhang X."/>
            <person name="Yang J."/>
            <person name="Chen L."/>
            <person name="Wang J."/>
            <person name="Xiong Z."/>
            <person name="Peng J."/>
            <person name="Sun L."/>
            <person name="Dong J."/>
            <person name="Xue Y."/>
            <person name="Xu X."/>
            <person name="Chen S."/>
            <person name="Yao Z."/>
            <person name="Shen Y."/>
            <person name="Jin Q."/>
        </authorList>
    </citation>
    <scope>NUCLEOTIDE SEQUENCE [LARGE SCALE GENOMIC DNA]</scope>
    <source>
        <strain>8401</strain>
    </source>
</reference>
<evidence type="ECO:0000255" key="1">
    <source>
        <dbReference type="HAMAP-Rule" id="MF_00691"/>
    </source>
</evidence>
<organism>
    <name type="scientific">Shigella flexneri serotype 5b (strain 8401)</name>
    <dbReference type="NCBI Taxonomy" id="373384"/>
    <lineage>
        <taxon>Bacteria</taxon>
        <taxon>Pseudomonadati</taxon>
        <taxon>Pseudomonadota</taxon>
        <taxon>Gammaproteobacteria</taxon>
        <taxon>Enterobacterales</taxon>
        <taxon>Enterobacteriaceae</taxon>
        <taxon>Shigella</taxon>
    </lineage>
</organism>
<protein>
    <recommendedName>
        <fullName evidence="1">5-oxoprolinase subunit A</fullName>
        <shortName evidence="1">5-OPase subunit A</shortName>
        <ecNumber evidence="1">3.5.2.9</ecNumber>
    </recommendedName>
    <alternativeName>
        <fullName evidence="1">5-oxoprolinase (ATP-hydrolyzing) subunit A</fullName>
    </alternativeName>
</protein>
<proteinExistence type="inferred from homology"/>
<keyword id="KW-0067">ATP-binding</keyword>
<keyword id="KW-0378">Hydrolase</keyword>
<keyword id="KW-0547">Nucleotide-binding</keyword>
<comment type="function">
    <text evidence="1">Catalyzes the cleavage of 5-oxoproline to form L-glutamate coupled to the hydrolysis of ATP to ADP and inorganic phosphate.</text>
</comment>
<comment type="catalytic activity">
    <reaction evidence="1">
        <text>5-oxo-L-proline + ATP + 2 H2O = L-glutamate + ADP + phosphate + H(+)</text>
        <dbReference type="Rhea" id="RHEA:10348"/>
        <dbReference type="ChEBI" id="CHEBI:15377"/>
        <dbReference type="ChEBI" id="CHEBI:15378"/>
        <dbReference type="ChEBI" id="CHEBI:29985"/>
        <dbReference type="ChEBI" id="CHEBI:30616"/>
        <dbReference type="ChEBI" id="CHEBI:43474"/>
        <dbReference type="ChEBI" id="CHEBI:58402"/>
        <dbReference type="ChEBI" id="CHEBI:456216"/>
        <dbReference type="EC" id="3.5.2.9"/>
    </reaction>
</comment>
<comment type="subunit">
    <text evidence="1">Forms a complex composed of PxpA, PxpB and PxpC.</text>
</comment>
<comment type="similarity">
    <text evidence="1">Belongs to the LamB/PxpA family.</text>
</comment>
<name>PXPA_SHIF8</name>
<feature type="chain" id="PRO_1000045223" description="5-oxoprolinase subunit A">
    <location>
        <begin position="1"/>
        <end position="244"/>
    </location>
</feature>